<evidence type="ECO:0000255" key="1">
    <source>
        <dbReference type="HAMAP-Rule" id="MF_00152"/>
    </source>
</evidence>
<protein>
    <recommendedName>
        <fullName evidence="1">Probable endonuclease 4</fullName>
        <ecNumber evidence="1">3.1.21.2</ecNumber>
    </recommendedName>
    <alternativeName>
        <fullName evidence="1">Endodeoxyribonuclease IV</fullName>
    </alternativeName>
    <alternativeName>
        <fullName evidence="1">Endonuclease IV</fullName>
    </alternativeName>
</protein>
<sequence>MPKLLGSFISFKAPNYFVQSAQDAIAIDATALMVFLGPPHSAYRVPFNKMQFSLGYELLKTKNINSNGLVVHAPYIINCASKDPLKQQNAISVLTNEIQLCNLAGAHYLVLHPGSAVAQTTNEALDNLVKVLNQVINKTKTTVICLETMAGKGNEIGRDLTELKYVIDRIVDKDRIGVCLDTCHFHDSGIDFSDLTGVFNTITTKLGFEFLKVIHLNESKNNCGSKKDRHANINAGMIGFENLMKFISHPQIKDLPIILETPSTSLNYPTIYREEISQIRSWFKTYQPDAN</sequence>
<keyword id="KW-0227">DNA damage</keyword>
<keyword id="KW-0234">DNA repair</keyword>
<keyword id="KW-0255">Endonuclease</keyword>
<keyword id="KW-0378">Hydrolase</keyword>
<keyword id="KW-0479">Metal-binding</keyword>
<keyword id="KW-0540">Nuclease</keyword>
<keyword id="KW-1185">Reference proteome</keyword>
<keyword id="KW-0862">Zinc</keyword>
<accession>P47477</accession>
<organism>
    <name type="scientific">Mycoplasma genitalium (strain ATCC 33530 / DSM 19775 / NCTC 10195 / G37)</name>
    <name type="common">Mycoplasmoides genitalium</name>
    <dbReference type="NCBI Taxonomy" id="243273"/>
    <lineage>
        <taxon>Bacteria</taxon>
        <taxon>Bacillati</taxon>
        <taxon>Mycoplasmatota</taxon>
        <taxon>Mycoplasmoidales</taxon>
        <taxon>Mycoplasmoidaceae</taxon>
        <taxon>Mycoplasmoides</taxon>
    </lineage>
</organism>
<gene>
    <name evidence="1" type="primary">nfo</name>
    <name type="ordered locus">MG235</name>
</gene>
<reference key="1">
    <citation type="journal article" date="1995" name="Science">
        <title>The minimal gene complement of Mycoplasma genitalium.</title>
        <authorList>
            <person name="Fraser C.M."/>
            <person name="Gocayne J.D."/>
            <person name="White O."/>
            <person name="Adams M.D."/>
            <person name="Clayton R.A."/>
            <person name="Fleischmann R.D."/>
            <person name="Bult C.J."/>
            <person name="Kerlavage A.R."/>
            <person name="Sutton G.G."/>
            <person name="Kelley J.M."/>
            <person name="Fritchman J.L."/>
            <person name="Weidman J.F."/>
            <person name="Small K.V."/>
            <person name="Sandusky M."/>
            <person name="Fuhrmann J.L."/>
            <person name="Nguyen D.T."/>
            <person name="Utterback T.R."/>
            <person name="Saudek D.M."/>
            <person name="Phillips C.A."/>
            <person name="Merrick J.M."/>
            <person name="Tomb J.-F."/>
            <person name="Dougherty B.A."/>
            <person name="Bott K.F."/>
            <person name="Hu P.-C."/>
            <person name="Lucier T.S."/>
            <person name="Peterson S.N."/>
            <person name="Smith H.O."/>
            <person name="Hutchison C.A. III"/>
            <person name="Venter J.C."/>
        </authorList>
    </citation>
    <scope>NUCLEOTIDE SEQUENCE [LARGE SCALE GENOMIC DNA]</scope>
    <source>
        <strain>ATCC 33530 / DSM 19775 / NCTC 10195 / G37</strain>
    </source>
</reference>
<proteinExistence type="inferred from homology"/>
<comment type="function">
    <text evidence="1">Endonuclease IV plays a role in DNA repair. It cleaves phosphodiester bonds at apurinic or apyrimidinic (AP) sites, generating a 3'-hydroxyl group and a 5'-terminal sugar phosphate.</text>
</comment>
<comment type="catalytic activity">
    <reaction evidence="1">
        <text>Endonucleolytic cleavage to 5'-phosphooligonucleotide end-products.</text>
        <dbReference type="EC" id="3.1.21.2"/>
    </reaction>
</comment>
<comment type="cofactor">
    <cofactor evidence="1">
        <name>Zn(2+)</name>
        <dbReference type="ChEBI" id="CHEBI:29105"/>
    </cofactor>
    <text evidence="1">Binds 3 Zn(2+) ions.</text>
</comment>
<comment type="similarity">
    <text evidence="1">Belongs to the AP endonuclease 2 family.</text>
</comment>
<dbReference type="EC" id="3.1.21.2" evidence="1"/>
<dbReference type="EMBL" id="L43967">
    <property type="protein sequence ID" value="AAC71456.1"/>
    <property type="molecule type" value="Genomic_DNA"/>
</dbReference>
<dbReference type="PIR" id="I64225">
    <property type="entry name" value="I64225"/>
</dbReference>
<dbReference type="RefSeq" id="WP_009885772.1">
    <property type="nucleotide sequence ID" value="NC_000908.2"/>
</dbReference>
<dbReference type="SMR" id="P47477"/>
<dbReference type="FunCoup" id="P47477">
    <property type="interactions" value="62"/>
</dbReference>
<dbReference type="STRING" id="243273.MG_235"/>
<dbReference type="GeneID" id="88282381"/>
<dbReference type="KEGG" id="mge:MG_235"/>
<dbReference type="eggNOG" id="COG0648">
    <property type="taxonomic scope" value="Bacteria"/>
</dbReference>
<dbReference type="HOGENOM" id="CLU_025885_0_4_14"/>
<dbReference type="InParanoid" id="P47477"/>
<dbReference type="OrthoDB" id="9805666at2"/>
<dbReference type="BioCyc" id="MGEN243273:G1GJ2-282-MONOMER"/>
<dbReference type="Proteomes" id="UP000000807">
    <property type="component" value="Chromosome"/>
</dbReference>
<dbReference type="GO" id="GO:0008833">
    <property type="term" value="F:deoxyribonuclease IV (phage-T4-induced) activity"/>
    <property type="evidence" value="ECO:0007669"/>
    <property type="project" value="UniProtKB-UniRule"/>
</dbReference>
<dbReference type="GO" id="GO:0003677">
    <property type="term" value="F:DNA binding"/>
    <property type="evidence" value="ECO:0007669"/>
    <property type="project" value="InterPro"/>
</dbReference>
<dbReference type="GO" id="GO:0003906">
    <property type="term" value="F:DNA-(apurinic or apyrimidinic site) endonuclease activity"/>
    <property type="evidence" value="ECO:0000318"/>
    <property type="project" value="GO_Central"/>
</dbReference>
<dbReference type="GO" id="GO:0008081">
    <property type="term" value="F:phosphoric diester hydrolase activity"/>
    <property type="evidence" value="ECO:0000318"/>
    <property type="project" value="GO_Central"/>
</dbReference>
<dbReference type="GO" id="GO:0008270">
    <property type="term" value="F:zinc ion binding"/>
    <property type="evidence" value="ECO:0007669"/>
    <property type="project" value="UniProtKB-UniRule"/>
</dbReference>
<dbReference type="GO" id="GO:0006284">
    <property type="term" value="P:base-excision repair"/>
    <property type="evidence" value="ECO:0000318"/>
    <property type="project" value="GO_Central"/>
</dbReference>
<dbReference type="CDD" id="cd00019">
    <property type="entry name" value="AP2Ec"/>
    <property type="match status" value="1"/>
</dbReference>
<dbReference type="FunFam" id="3.20.20.150:FF:000001">
    <property type="entry name" value="Probable endonuclease 4"/>
    <property type="match status" value="1"/>
</dbReference>
<dbReference type="Gene3D" id="3.20.20.150">
    <property type="entry name" value="Divalent-metal-dependent TIM barrel enzymes"/>
    <property type="match status" value="1"/>
</dbReference>
<dbReference type="HAMAP" id="MF_00152">
    <property type="entry name" value="Nfo"/>
    <property type="match status" value="1"/>
</dbReference>
<dbReference type="InterPro" id="IPR001719">
    <property type="entry name" value="AP_endonuc_2"/>
</dbReference>
<dbReference type="InterPro" id="IPR018246">
    <property type="entry name" value="AP_endonuc_F2_Zn_BS"/>
</dbReference>
<dbReference type="InterPro" id="IPR036237">
    <property type="entry name" value="Xyl_isomerase-like_sf"/>
</dbReference>
<dbReference type="InterPro" id="IPR013022">
    <property type="entry name" value="Xyl_isomerase-like_TIM-brl"/>
</dbReference>
<dbReference type="NCBIfam" id="TIGR00587">
    <property type="entry name" value="nfo"/>
    <property type="match status" value="1"/>
</dbReference>
<dbReference type="PANTHER" id="PTHR21445:SF0">
    <property type="entry name" value="APURINIC-APYRIMIDINIC ENDONUCLEASE"/>
    <property type="match status" value="1"/>
</dbReference>
<dbReference type="PANTHER" id="PTHR21445">
    <property type="entry name" value="ENDONUCLEASE IV ENDODEOXYRIBONUCLEASE IV"/>
    <property type="match status" value="1"/>
</dbReference>
<dbReference type="Pfam" id="PF01261">
    <property type="entry name" value="AP_endonuc_2"/>
    <property type="match status" value="1"/>
</dbReference>
<dbReference type="SMART" id="SM00518">
    <property type="entry name" value="AP2Ec"/>
    <property type="match status" value="1"/>
</dbReference>
<dbReference type="SUPFAM" id="SSF51658">
    <property type="entry name" value="Xylose isomerase-like"/>
    <property type="match status" value="1"/>
</dbReference>
<dbReference type="PROSITE" id="PS00729">
    <property type="entry name" value="AP_NUCLEASE_F2_1"/>
    <property type="match status" value="1"/>
</dbReference>
<dbReference type="PROSITE" id="PS00730">
    <property type="entry name" value="AP_NUCLEASE_F2_2"/>
    <property type="match status" value="1"/>
</dbReference>
<dbReference type="PROSITE" id="PS00731">
    <property type="entry name" value="AP_NUCLEASE_F2_3"/>
    <property type="match status" value="1"/>
</dbReference>
<dbReference type="PROSITE" id="PS51432">
    <property type="entry name" value="AP_NUCLEASE_F2_4"/>
    <property type="match status" value="1"/>
</dbReference>
<name>END4_MYCGE</name>
<feature type="chain" id="PRO_0000190852" description="Probable endonuclease 4">
    <location>
        <begin position="1"/>
        <end position="291"/>
    </location>
</feature>
<feature type="binding site" evidence="1">
    <location>
        <position position="72"/>
    </location>
    <ligand>
        <name>Zn(2+)</name>
        <dbReference type="ChEBI" id="CHEBI:29105"/>
        <label>1</label>
    </ligand>
</feature>
<feature type="binding site" evidence="1">
    <location>
        <position position="112"/>
    </location>
    <ligand>
        <name>Zn(2+)</name>
        <dbReference type="ChEBI" id="CHEBI:29105"/>
        <label>1</label>
    </ligand>
</feature>
<feature type="binding site" evidence="1">
    <location>
        <position position="147"/>
    </location>
    <ligand>
        <name>Zn(2+)</name>
        <dbReference type="ChEBI" id="CHEBI:29105"/>
        <label>1</label>
    </ligand>
</feature>
<feature type="binding site" evidence="1">
    <location>
        <position position="147"/>
    </location>
    <ligand>
        <name>Zn(2+)</name>
        <dbReference type="ChEBI" id="CHEBI:29105"/>
        <label>2</label>
    </ligand>
</feature>
<feature type="binding site" evidence="1">
    <location>
        <position position="181"/>
    </location>
    <ligand>
        <name>Zn(2+)</name>
        <dbReference type="ChEBI" id="CHEBI:29105"/>
        <label>2</label>
    </ligand>
</feature>
<feature type="binding site" evidence="1">
    <location>
        <position position="184"/>
    </location>
    <ligand>
        <name>Zn(2+)</name>
        <dbReference type="ChEBI" id="CHEBI:29105"/>
        <label>3</label>
    </ligand>
</feature>
<feature type="binding site" evidence="1">
    <location>
        <position position="215"/>
    </location>
    <ligand>
        <name>Zn(2+)</name>
        <dbReference type="ChEBI" id="CHEBI:29105"/>
        <label>2</label>
    </ligand>
</feature>
<feature type="binding site" evidence="1">
    <location>
        <position position="228"/>
    </location>
    <ligand>
        <name>Zn(2+)</name>
        <dbReference type="ChEBI" id="CHEBI:29105"/>
        <label>3</label>
    </ligand>
</feature>
<feature type="binding site" evidence="1">
    <location>
        <position position="230"/>
    </location>
    <ligand>
        <name>Zn(2+)</name>
        <dbReference type="ChEBI" id="CHEBI:29105"/>
        <label>3</label>
    </ligand>
</feature>
<feature type="binding site" evidence="1">
    <location>
        <position position="260"/>
    </location>
    <ligand>
        <name>Zn(2+)</name>
        <dbReference type="ChEBI" id="CHEBI:29105"/>
        <label>2</label>
    </ligand>
</feature>